<accession>Q8CP76</accession>
<gene>
    <name type="primary">ebh</name>
    <name type="ordered locus">SE_1128</name>
</gene>
<comment type="subcellular location">
    <subcellularLocation>
        <location evidence="3">Cell membrane</location>
        <topology evidence="3">Single-pass membrane protein</topology>
    </subcellularLocation>
</comment>
<feature type="chain" id="PRO_0000345984" description="Extracellular matrix-binding protein ebh">
    <location>
        <begin position="1"/>
        <end position="9439"/>
    </location>
</feature>
<feature type="transmembrane region" description="Helical" evidence="1">
    <location>
        <begin position="9306"/>
        <end position="9324"/>
    </location>
</feature>
<feature type="domain" description="FIVAR 1">
    <location>
        <begin position="1815"/>
        <end position="1871"/>
    </location>
</feature>
<feature type="domain" description="FIVAR 2">
    <location>
        <begin position="1901"/>
        <end position="1957"/>
    </location>
</feature>
<feature type="domain" description="FIVAR 3">
    <location>
        <begin position="1985"/>
        <end position="2041"/>
    </location>
</feature>
<feature type="domain" description="FIVAR 4">
    <location>
        <begin position="2071"/>
        <end position="2127"/>
    </location>
</feature>
<feature type="domain" description="FIVAR 5">
    <location>
        <begin position="2155"/>
        <end position="2211"/>
    </location>
</feature>
<feature type="domain" description="FIVAR 6">
    <location>
        <begin position="2241"/>
        <end position="2297"/>
    </location>
</feature>
<feature type="domain" description="FIVAR 7">
    <location>
        <begin position="2325"/>
        <end position="2381"/>
    </location>
</feature>
<feature type="domain" description="FIVAR 8">
    <location>
        <begin position="2411"/>
        <end position="2467"/>
    </location>
</feature>
<feature type="domain" description="FIVAR 9">
    <location>
        <begin position="2488"/>
        <end position="2551"/>
    </location>
</feature>
<feature type="domain" description="FIVAR 10">
    <location>
        <begin position="2581"/>
        <end position="2638"/>
    </location>
</feature>
<feature type="domain" description="FIVAR 11">
    <location>
        <begin position="2665"/>
        <end position="2720"/>
    </location>
</feature>
<feature type="domain" description="FIVAR 12">
    <location>
        <begin position="2748"/>
        <end position="2804"/>
    </location>
</feature>
<feature type="domain" description="FIVAR 13">
    <location>
        <begin position="2832"/>
        <end position="2888"/>
    </location>
</feature>
<feature type="domain" description="FIVAR 14">
    <location>
        <begin position="2918"/>
        <end position="2974"/>
    </location>
</feature>
<feature type="domain" description="FIVAR 15">
    <location>
        <begin position="3002"/>
        <end position="3058"/>
    </location>
</feature>
<feature type="domain" description="FIVAR 16">
    <location>
        <begin position="3088"/>
        <end position="3144"/>
    </location>
</feature>
<feature type="domain" description="FIVAR 17">
    <location>
        <begin position="3172"/>
        <end position="3228"/>
    </location>
</feature>
<feature type="domain" description="FIVAR 18">
    <location>
        <begin position="3258"/>
        <end position="3314"/>
    </location>
</feature>
<feature type="domain" description="FIVAR 19">
    <location>
        <begin position="3335"/>
        <end position="3398"/>
    </location>
</feature>
<feature type="domain" description="FIVAR 20">
    <location>
        <begin position="3428"/>
        <end position="3484"/>
    </location>
</feature>
<feature type="domain" description="FIVAR 21">
    <location>
        <begin position="3512"/>
        <end position="3567"/>
    </location>
</feature>
<feature type="domain" description="FIVAR 22">
    <location>
        <begin position="3595"/>
        <end position="3650"/>
    </location>
</feature>
<feature type="domain" description="FIVAR 23">
    <location>
        <begin position="3678"/>
        <end position="3733"/>
    </location>
</feature>
<feature type="domain" description="FIVAR 24">
    <location>
        <begin position="3802"/>
        <end position="3860"/>
    </location>
</feature>
<feature type="domain" description="FIVAR 25">
    <location>
        <begin position="3928"/>
        <end position="3983"/>
    </location>
</feature>
<feature type="domain" description="FIVAR 26">
    <location>
        <begin position="4056"/>
        <end position="4114"/>
    </location>
</feature>
<feature type="domain" description="FIVAR 27">
    <location>
        <begin position="4182"/>
        <end position="4240"/>
    </location>
</feature>
<feature type="domain" description="FIVAR 28">
    <location>
        <begin position="4308"/>
        <end position="4365"/>
    </location>
</feature>
<feature type="domain" description="FIVAR 29">
    <location>
        <begin position="4433"/>
        <end position="4491"/>
    </location>
</feature>
<feature type="domain" description="FIVAR 30">
    <location>
        <begin position="4559"/>
        <end position="4617"/>
    </location>
</feature>
<feature type="domain" description="FIVAR 31">
    <location>
        <begin position="4685"/>
        <end position="4743"/>
    </location>
</feature>
<feature type="domain" description="FIVAR 32">
    <location>
        <begin position="4811"/>
        <end position="4869"/>
    </location>
</feature>
<feature type="domain" description="FIVAR 33">
    <location>
        <begin position="4937"/>
        <end position="4995"/>
    </location>
</feature>
<feature type="domain" description="FIVAR 34">
    <location>
        <begin position="5063"/>
        <end position="5115"/>
    </location>
</feature>
<feature type="domain" description="FIVAR 35">
    <location>
        <begin position="5189"/>
        <end position="5246"/>
    </location>
</feature>
<feature type="domain" description="FIVAR 36">
    <location>
        <begin position="5314"/>
        <end position="5372"/>
    </location>
</feature>
<feature type="domain" description="FIVAR 37">
    <location>
        <begin position="5440"/>
        <end position="5498"/>
    </location>
</feature>
<feature type="domain" description="FIVAR 38">
    <location>
        <begin position="5566"/>
        <end position="5624"/>
    </location>
</feature>
<feature type="domain" description="FIVAR 39">
    <location>
        <begin position="5692"/>
        <end position="5750"/>
    </location>
</feature>
<feature type="domain" description="FIVAR 40">
    <location>
        <begin position="5818"/>
        <end position="5875"/>
    </location>
</feature>
<feature type="domain" description="FIVAR 41">
    <location>
        <begin position="5943"/>
        <end position="6000"/>
    </location>
</feature>
<feature type="domain" description="FIVAR 42">
    <location>
        <begin position="6068"/>
        <end position="6126"/>
    </location>
</feature>
<feature type="domain" description="FIVAR 43">
    <location>
        <begin position="6194"/>
        <end position="6252"/>
    </location>
</feature>
<feature type="domain" description="FIVAR 44">
    <location>
        <begin position="6320"/>
        <end position="6378"/>
    </location>
</feature>
<feature type="domain" description="FIVAR 45">
    <location>
        <begin position="6446"/>
        <end position="6504"/>
    </location>
</feature>
<feature type="domain" description="FIVAR 46">
    <location>
        <begin position="6572"/>
        <end position="6630"/>
    </location>
</feature>
<feature type="domain" description="FIVAR 47">
    <location>
        <begin position="6698"/>
        <end position="6755"/>
    </location>
</feature>
<feature type="domain" description="FIVAR 48">
    <location>
        <begin position="6823"/>
        <end position="6877"/>
    </location>
</feature>
<feature type="domain" description="FIVAR 49">
    <location>
        <begin position="6949"/>
        <end position="7007"/>
    </location>
</feature>
<feature type="domain" description="FIVAR 50">
    <location>
        <begin position="7075"/>
        <end position="7133"/>
    </location>
</feature>
<feature type="domain" description="FIVAR 51">
    <location>
        <begin position="7201"/>
        <end position="7259"/>
    </location>
</feature>
<feature type="domain" description="FIVAR 52">
    <location>
        <begin position="7327"/>
        <end position="7384"/>
    </location>
</feature>
<feature type="domain" description="FIVAR 53">
    <location>
        <begin position="7452"/>
        <end position="7510"/>
    </location>
</feature>
<feature type="domain" description="FIVAR 54">
    <location>
        <begin position="7578"/>
        <end position="7636"/>
    </location>
</feature>
<feature type="domain" description="FIVAR 55">
    <location>
        <begin position="7704"/>
        <end position="7762"/>
    </location>
</feature>
<feature type="domain" description="FIVAR 56">
    <location>
        <begin position="7830"/>
        <end position="7888"/>
    </location>
</feature>
<feature type="domain" description="FIVAR 57">
    <location>
        <begin position="7956"/>
        <end position="8010"/>
    </location>
</feature>
<feature type="domain" description="FIVAR 58">
    <location>
        <begin position="8078"/>
        <end position="8137"/>
    </location>
</feature>
<feature type="domain" description="FIVAR 59">
    <location>
        <begin position="8205"/>
        <end position="8264"/>
    </location>
</feature>
<feature type="domain" description="FIVAR 60">
    <location>
        <begin position="8332"/>
        <end position="8391"/>
    </location>
</feature>
<feature type="domain" description="FIVAR 61">
    <location>
        <begin position="8459"/>
        <end position="8518"/>
    </location>
</feature>
<feature type="domain" description="FIVAR 62">
    <location>
        <begin position="8587"/>
        <end position="8643"/>
    </location>
</feature>
<feature type="region of interest" description="Disordered" evidence="2">
    <location>
        <begin position="2495"/>
        <end position="2514"/>
    </location>
</feature>
<feature type="region of interest" description="Disordered" evidence="2">
    <location>
        <begin position="2925"/>
        <end position="2951"/>
    </location>
</feature>
<feature type="region of interest" description="Disordered" evidence="2">
    <location>
        <begin position="4649"/>
        <end position="4674"/>
    </location>
</feature>
<feature type="region of interest" description="Disordered" evidence="2">
    <location>
        <begin position="5699"/>
        <end position="5719"/>
    </location>
</feature>
<feature type="region of interest" description="Disordered" evidence="2">
    <location>
        <begin position="6413"/>
        <end position="6434"/>
    </location>
</feature>
<feature type="region of interest" description="Disordered" evidence="2">
    <location>
        <begin position="9363"/>
        <end position="9439"/>
    </location>
</feature>
<feature type="compositionally biased region" description="Basic and acidic residues" evidence="2">
    <location>
        <begin position="2495"/>
        <end position="2507"/>
    </location>
</feature>
<feature type="compositionally biased region" description="Polar residues" evidence="2">
    <location>
        <begin position="2925"/>
        <end position="2938"/>
    </location>
</feature>
<feature type="compositionally biased region" description="Polar residues" evidence="2">
    <location>
        <begin position="5699"/>
        <end position="5712"/>
    </location>
</feature>
<feature type="compositionally biased region" description="Basic and acidic residues" evidence="2">
    <location>
        <begin position="9363"/>
        <end position="9375"/>
    </location>
</feature>
<feature type="compositionally biased region" description="Basic and acidic residues" evidence="2">
    <location>
        <begin position="9386"/>
        <end position="9395"/>
    </location>
</feature>
<feature type="compositionally biased region" description="Basic and acidic residues" evidence="2">
    <location>
        <begin position="9404"/>
        <end position="9413"/>
    </location>
</feature>
<feature type="compositionally biased region" description="Basic residues" evidence="2">
    <location>
        <begin position="9414"/>
        <end position="9439"/>
    </location>
</feature>
<sequence>MSGTLHNTVGSGILPYQQEIRIKLTSNEPIKDSEWSITGYPNTLTLQNAVGRTNNATEKNLALVGHIDPGNYFITVKFGDKVEQFEIRSKPTPPRIITTANELRGNPNHKPEIRVTDIPNDTTAKIKLVMGGTDGDHDPEINPYTVPENYTVVAEAYHDNDPSKNGVLTFRSSDYLKDLPLSGELKAIVYYNQYVQSNFSKSVPFSSDTTPPTINEPAGLVHKYYRGDHVEITLPVTDNTGGSGLRDVNVNLPQGWTKTFTINPNNNTEGTLKLIGNIPSNEAYNTTYHFNITATDNSGNTTNPAKTFILNVGKLADDLNPVGLSRDQLQLVTDPSSLSNSEREEVKRKISEANANIRSYLLQNNPILAGVNGDVTFYYRDGSVDVIDAENVITYEPERKSIFSENGNTNKKEAVITIARGQNYTIGPNLRKYFSLSNGSDLPNRDFTSISAIGSLPSSSEISRLNVGNYNYRVNAKNAYHKTQQELNLKLKIVEVNAPTGNNRVYRVSTYNLTNDEINKIKQAFKAANSGLNLNDNDITVSNNFDHRNVSSVTVTIRKGDLIKEFSSNLNNMNFLRWVNIRDDYTISWTSSKIQGRNTDGGLEWSPDHKSLIYKYDATLGRQINTNDVLTLLQATAKNSNLRSNINSNEKQLAERGSNGYSKSIIRDDGEKSYLLNSNPIQVLDLVEPDNGYGGRQVSHSNVIYNEKNSSIVNGQVPEANGASAFNIDKVVKANAANNGIMGVIYKAQLYLAPYSPKGYIEKLGQNLSNTNNVINVYFVPSDKVNPSITVGNYDHHTVYSGETFKNTINVNDNYGLNTVASTSDSAITMTRNNNELVGQAPNVTNSINKIVKVKATDKSGNESIVSFTVNIKPLNEKYRITTSSSNQTPVRISNIQNNANLSIEDQNRVKSSLSMTKILGTRNYVNESNNDVRSQVVSKVNRSGNNATVNVTTTFSDGTTNTITVPVKHVLLEVVPTTRTTVRGQQFPTGKGTSPNDFFSLRTGGPVDARIVWVNNQGPDINSNQIGRDLTLHAEIFFDGETTPIRKDTTYKLSQSIPKQIYETTINGRFNSSGDAYPGNFVQAVNQYWPEHMDFRWAQGSGTPSSRNAGSFTKTVTVVYQNGQTENVNVLFKVKPNKPVIDSNSVISKGQLNGQQILVRNVPQNAQVTLYQSNGTVIPNTNTTIDSNGIATVTIQGTLPTGNITAKTSMTNNVTYTKQNSSGIASNTTEDISVFSENSDQVNVTAGMQAKNDGIKIIKGTNYNFNDFNSFISNIPAHSTLTWNEEPNSWKNNIGTTTKTVTVTLPNHQGTRTVDIPITIYPTVTAKNPVRDQKGRNLTNGTDVYNYIIFENNNRLGGTASWKDNRQPDKNIAGVQNLIALVNYPGISTPLEVPVKVWVYNFDFTQPIYKIQVGDTFPKGTWAGYYKHLENGEGLPIDGWKFYWNQQSTGTTSDQWQSLAYTRTPFVKTGTYDVVNPSNWGVWQTSQSAKFIVTNAKPNQPTITQSKTGDVTVTPGAVRNILISGTNDYIQASADKIVINKNGNKLTTFVKNNDGRWTVETGSPDINGIGPTNNGTAISLSRLAVRPGDSIEAIATEGSGETISTSATSEIYIVKAPQPEQVATHTYDNGTFDILPDNSRNSLNPTERVEINYTEKLNGNETQKSFTITKNNNGKWTINNKPNYVEFNQDNGKVVFSANTIKPNSQITITPKAGQGNTENTNPTVIQAPAQHTLTINEIVKEQGQNVTNDDINNAVQVPNKNRVAIKQGNALPTNLAGGSTSHIPVVIYYSDGSSEEATETVRTKVNKTELINARRRLDEEISKENKTPSSIRNFDQAMNRAQSQINTAKSDADQVIGTEFATPQQVNSALSKVQAAQNKINEAKALLQNKADNSQLVRAKEQLQQSIQPAASTDGMTQDSTRNYNNKRQAAEQAIQHANSVINNGDATSQQINDAKNTVEQAQRDYVEAKSNLRADKSQLQSAYDTLNRDVLTNDKKPASVRRYNEAISNIRKELDTAKADASSTLRNTNPSVEQVRDALNKINTVQPKVNQAIALLQPKENNSELVQAKKRLQDAVNDIPQTQGMTQQTINNYNDKQREAERALTSAQRVIDNGDATTQEITSEKSKVEQAMQALTNAKSNLRADKNELQTAYNKLIENVSTNGKKPASIRQYETAKARIQNQINDAKNEAERILGNDNPQVSQVTQALNKIKAIQPKLTEAINMLQNKENNTELVNAKNRLENAVNDTDPTHGMTQETINNYNAKKREAQNEIQKANMIINNGDATAQDISSEKSKVEQVLQALQNAKNDLRADKRELQTAYNKLIQNVNTNGKKPSSIQNYKSARRNIENQYNTAKNEAHNVLENTNPTVNAVEDALRKINAIQPEVTKAINILQDKEDNSELVRAKEKLDQAINSQPSLNGMTQESINNYTTKRREAQNIASSADTIINNGDASIEQITENKIRVEEATNALNEAKQHLTADTTSLKTEVRKLSRRGDTNNKKPSSVSAYNNTIHSLQSEITQTENRANTIINKPIRSVEEVNNALHEVNQLNQRLTDTINLLQPLANKESLKEARNRLESKINETVQTDGMTQQSVENYKQAKIKAQNESSIAQTLINNGDASDQEVSTEIEKLNQKLSELTNSINHLTVNKEPLETAKNQLQANIDQKPSTDGMTQQSVQSYERKLQEAKDKINSINNVLANNPDVNAIRTNKVETEQINNELTQAKQGLTVDKQPLINAKTALQQSLDNQPSTTGMTEATIQNYNAKRQKAEQVIQNANKIIENAQPSVQQVSDEKSKVEQALSELNNAKSALRADKQELQQAYNQLIQPTDLNNKKPASITAYNQRYQQFSNELNSTKTNTDRILKEQNPSVADVNNALNKVREVQQKLNEARALLQNKEDNSALVRAKEQLQQAVDQVPSTEGMTQQTKDDYNSKQQAAQQEISKAQQVIDNGDATTQQISNAKTNVERALEALNNAKTGLRADKEELQNAYNQLTQNIDTSGKTPASIRKYNEAKSRIQTQIDSAKNEANSILTNDNPQVSQVTAALNKIKAVQPELDKAIAMLKNKENNNALVQAKQQLQQIVNEVDPTQGMTTDTANNYKSKKREAEDEIQKAQQIINNGDATEQQITNETNRVNQAINAINKAKNDLRADKSQLENAYNQLIQNVDTNGKKPASIQQYQAARQAIETQYNNAKSEAHQILENSNPSVNEVAQALQKVEAVQLKVNDAIHILQNKENNSALVTAKNQLQQSVNDQPLTTGMTQDSINNYEAKRNEAQSAIRNAEAVINNGDATAKQISDEKSKVEQALAHLNDAKQQLTADTTELQTAVQQLNRRGDTNNKKPRSINAYNKAIQSLETQITSAKDNANAVIQKPIRTVQEVNNALQQVNQLNQQLTEAINQLQPLSNNDALKAARLNLENKINQTVQTDGMTQQSIEAYQNAKRVAQNESNTALALINNGDADEQQITTETDRVNQQTTNLTQAINGLTVNKEPLETAKTALQNNIDQVPSTDGMTQQSVANYNQKLQIAKNEINTINNVLANNPDVNAIKTNKAEAERISNDLTQAKNNLQVDTQPLEKIKRQLQDEIDQGTNTDGMTQDSVDNYNDSLSAAIIEKGKVNKLLKRNPTVEQVKESVANAQQVIQDLQNARTSLVPDKTQLQEAKNRLENSINQQTDTDGMTQDSLNNYNDKLAKARQNLEKISKVLGGQPTVAEIRQNTDEANAHKQALDTARSQLTLNREPYINHINNESHLNNAQKDNFKAQVNSAPNHNTLETIKNKADTLNQSMTALSESIADYENQKQQENYLDASNNKRQDYDNAVNAAKGILNQTQSPTMSADVIDQKAEDVKRTKTALDGNQRLEVAKQQALNHLNTLNDLNDAQRQTLTDTINHSPNINSVNQAKEKANTVNTAMTQLKQTIANYDDELHDGNYINADKDKKDAYNNAVNNAKQLINQSDANQAQLDPAEINKVTQRVNTTKNDLNGNDKLAEAKRDANTTIDGLTYLNEAQRNKAKENVGKASTKTNITSQLQDYNQLNIAMQALRNSVNDVNNVKANSNYINEDNGPKEAYNQAVTHAQTLINAQSNPEMSRDVVNQKTQAVNTAHQNLHGQQKLEQAQSSANTEIGNLPNLTNTQKAKEKELVNSKQTRTEVQEQLNQAKSLDSSMGTLKSLVAKQPTVQKTSVYINEDQPEQSAYNDSITMGQTIINKTADPVLDKTLVDNAISNISTKENALHGEQKLTTAKTEAINALNTLADLNTPQKEAIKTAINTAHTRTDVTAEQSKANQINSAMHTLRQNISDNESVTNESNYINAEPEKQHAFTEALNNAKEIVNEQQATLDANSINQKAQAILTTKNALDGEEQLRRAKENADQEINTLNQLTDAQRNSEKGLVNSSQTRTEVASQLAKAKELNKVMEQLNHLINGKNQMINSSKFINEDANQQQAYSNAIASAEALKNKSQNPELDKVTIEQAINNINSAINNLNGEAKLTKAKEDAVASINNLSGLTNEQKTKENQAVNGAQTRDQVANKLRDAEALDQSMQTLRDLVNNQNAIHSTSNYFNEDSTQKNTYDNAIDNGSTYITGQHNPELNKSTIDQTISRINTAKNDLHGVEKLQRDKGTANQEIGQLGYLNDPQKSGEESLVNGSNTRSEVEEHLNEAKSLNNAMKQLRDKVAEKTNVKQSSDYINDSTEHQRGYDQALQEAENIINEIGNPTLNKSEIEQKLQQLTDAQNALQGSHLLEEAKNNAITGINKLTALNDAQRQKAIENVQAQQTIPAVNQQLTLDREINTAMQALRDKVGQQNNVHQQSNYFNEDEQPKHNYDNSVQAGQTIIDKLQDPIMNKNEIEQAINQINTTQTALSGENKLHTDQESTNRQIEGLSSLNTAQINAEKDLVNQAKTRTDVAQKLAAAKEINSAMSNLRDGIQNKEDIKRSSAYINADPTKVTAYDQALQNAENIINATPNVELNKATIEQALSRVQQAQQDLDGVQQLANAKQQATQTVNGLNSLNDGQKRELNLLINSANTRTKVQEELNKATELNHAMEALRNSVQNVDQVKQSSNYVNEDQPEQHNYDNAVNEAQATINNNAQPVLDKLAIERLTQTVNTTKDALHGAQKLTQDQQAAETGIRGLTSLNEPQKNAEVAKVTAATTRDEVRNIRQEATTLDTAMLGLRKSIKDKNDTKNSSKYINEDHDQQQAYDNAVNNAQQVIDETQATLSSDTINQLANAVTQAKSNLHGDTKLQHDKDSAKQTIAQLQNLNSAQKHMEDSLIDNESTRTQVQHDLTEAQALDGLMGALKESIKDYTNIVSNGNYINAEPSKKQAYDAAVQNAQNIINGTNQPTINKGNVTTATQTVKNTKDALDGDHRLEEAKNNANQTIRNLSNLNNAQKDAEKNLVNSASTLEQVQQNLQTAQQLDNAMGELRQSIAKKDQVKADSKYLNEDPQIKQNYDDAVQRVETIINETQNPELLKANIDQATQSVQNAEQALHGAEKLNQDKQTSSTELDGLTDLTDAQREKLREQINTSNSRDDIKQKIEQAKALNDAMKKLKEQVAQKDGVHANSDYTNEDSAQKDAYNNALKQAEDIINNSSNPNLNAQDITNALNNIKQAQDNLHGAQKLQQDKNTTNQAIGNLNHLNQPQKDALIQAINGATSRDQVAEKLKEAEALDEAMKQLEDQVNQDDQISNSSPFINEDSDKQKTYNDKIQAAKEIINQTSNPTLDKQKIADTLQNIKDAVNNLHGDQKLAQSKQDANNQLNHLDDLTEEQKNHFKPLINNADTRDEVNKQLEIAKQLNGDMSTLHKVINDKDQIQHLSNYINADNDKKQNYDNAIKEAEDLIHNHPDTLDHKALQDLLNKIDQAHNELNGESRFKQALDNALNDIDSLNSLNVPQRQTVKDNINHVTTLESLAQELQKAKELNDAMKAMRDSIMNQEQIRKNSNYTNEDLAQQNAYNHAVDKINNIIGEDNATMDPQIIKQATQDINTAINGLNGDQKLQDAKTDAKQQITNFTGLTEPQKQALENIINQQTSRANVAKQLSHAKFLNGKMEELKVAVAKASLVRQNSNYINEDVSEKEAYEQAIAKGQEIINSENNPTISSTDINRTIQEINDAEQNLHGDNKLRQAQEIAKNEIQNLDGLNSAQITKLIQDIGRTTTKPAVTQKLEEAKAINQAMQQLKQSIADKDATLNSSNYLNEDSEKKLAYDNAVSQAEQLINQLNDPTMDISNIQAITQKVIQAKDSLHGANKLAQNQADSNLIINQSTNLNDKQKQALNDLINHAQTKQQVAEIIAQANKLNNEMGTLKTLVEEQSNVHQQSKYINEDPQVQNIYNDSIQKGREILNGTTDDVLNNNKIADAIQNIHLTKNDLHGDQKLQKAQQDATNELNYLTNLNNSQRQSEHDEINSAPSRTEVSNDLNHAKALNEAMRQLENEVALENSVKKLSDFINEDEAAQNEYSNALQKAKDIINGVPSSTLDKATIEDALLELQNARESLHGEQKLQEAKNQAVAEIDNLQALNPGQVLAEKTLVNQASTKPEVQEALQKAKELNEAMKALKTEINKKEQIKADSRYVNADSGLQANYNSALNYGSQIIATTQPPELNKDVINRATQTIKTAENNLNGQSKLAEAKSDGNQSIEHLQGLTQSQKDKQHDLINQAQTKQQVDDIVNNSKQLDNSMNQLQQIVNNDNTVKQNSDFINEDSSQQDAYNHAIQAAKDLITAHPTIMDKNQIDQAIENIKQALNDLHGSNKLSEDKKEASEQLQNLNSLTNGQKDTILNHIFSAPTRSQVGEKIASAKQLNNTMKALRDSIADNNEILQSSKYFNEDSEQQNAYNQAVNKAKNIINDQPTPVMANDEIQSVLNEVKQTKDNLHGDQKLANDKTDAQATLNALNYLNQAQRGNLETKVQNSNSRPEVQKVVQLANQLNDAMKKLDDALTGNDAIKQTSNYINEDTSQQVNFDEYTDRGKNIVAEQTNPNMSPTNINTIADKITEAKNDLHGVQKLKQAQQQSINTINQMTGLNQAQKEQLNQEIQQTQTRSEVHQVINKAQALNDSMNTLRQSITDEHEVKQTSNYINETVGNQTAYNNAVDRVKQIINQTSNPTMNPLEVERATSNVKISKDALHGERELNDNKNSKTFAVNHLDNLNQAQKEALTHEIEQATIVSQVNNIYNKAKALNNDMKKLKDIVAQQDNVRQSNNYINEDSTPQNMYNDTINHAQSIIDQVANPTMSHDEIENAINNIKHAINALDGEHKLQQAKENANLLINSLNDLNAPQRDAINRLVNEAQTREKVAEQLQSAQALNDAMKHLRNSIQNQSSVRQESKYINASDAKKEQYNHAVREVENIINEQHPTLDKEIIKQLTDGVNQANNDLNGVELLDADKQNAHQSIPTLMHLNQAQQNALNEKINNAVTRTEVAAIIGQAKLLDHAMENLEESIKDKEQVKQSSNYINEDSDVQETYDNAVDHVTEILNQTVNPTLSIEDIEHAINEVNQAKKQLRGKQKLYQTIDLADKELSKLDDLTSQQSSSISNQIYTAKTRTEVAQAIEKAKSLNHAMKALNKVYKNADKVLDSSRFINEDQPEKKAYQQAINHVDSIIHRQTNPEMDPTVINSITHELETAQNNLHGDQKLAHAQQDAANVINGLIHLNVAQREVMINTNTNATTREKVAKNLDNAQALDKAMETLQQVVAHKNNILNDSKYLNEDSKYQQQYDRVIADAEQLLNQTTNPTLEPYKVDIVKDNVLANEKILFGAEKLSYDKSNANDEIKHMNYLNNAQKQSIKDMISHAALRTEVKQLLQQAKILDEAMKSLEDKTQVVITDTTLPNYTEASEDKKEKVDQTVSHAQAIIDKINGSNVSLDQVRQALEQLTQASENLDGDQRVEEAKVHANQTIDQLTHLNSLQQQTAKESVKNATKLEEIATVSNNAQALNKVMGKLEQFINHADSVENSDNYRQADDDKIIAYDEALEHGQDIQKTNATQNETKQALQQLIYAETSLNGFERLNHARPRALEYIKSLEKINNAQKSALEDKVTQSHDLLELEHIVNEGTNLNDIMGELANAIVNNYAPTKASINYINADNLRKDNFTQAINNARDALNKTQGQNLDFNAIDTFKDDIFKTKDALNGIERLTAAKSKAEKLIDSLKFINKAQFTHANDEIMNTNSIAQLSRIVNQAFDLNDAMKSLRDELNNQAFPVQASSNYINSDEDLKQQFDHALSNARKVLAKENGKNLDEKQIQGLKQVIEDTKDALNGIQRLSKAKAKAIQYVQSLSYINDAQRHIAENNIHNSDDLSSLANTLSKASDLDNAMKDLRDTIESNSTSVPNSVNYINADKNLQIEFDEALQQASATSSKTSENPATIEEVLGLSQAIYDTKNALNGEQRLATEKSKDLKLIKGLKDLNKAQLEDVTNKVNSANTLTELSQLTQSTLELNDKMKLLRDKLKTLVNPVKASLNYRNADYNLKRQFNKALKEAKGVLNKNSGTNVNINDIQHLLTQIDNAKDQLNGERRLKEHQQKSEVFIIKELDILNNAQKAAIINQIRASKDIKIINQIVDNAIELNDAMQGLKEHVAQLTATTKDNIEYLNADEDHKLQYDYAINLANNVLDKENGTNKDANIIIGMIQNMDDARALLNGIERLKDAQTKAHNDIKDTLKRQLDEIEHANATSNSKAQAKQMVNEEARKALSNINDATSNDLVNQAKDEGQSAIEHIHADELPKAKLDANQMIDQKVEDINHLISQNPNLSNEEKNKLISQINKLVNGIKNEIQQAINKQQIENATTKLDEVIETTKKLIIAKAEAKQMIKELSQKKRDAINNNTDLTPSQKAHALADIDKTEKDALQHIENSNSIDDINNNKEHAFNTLAHIIIWDTDQQPLVFELPELSLQNALVTSEVVVHRDETISLESIIGAMTLTDELKVNIVSLPNTDKVADHLTAKVKVILADGSYVTVNVPVKVVEKELQIAKKDAIKTIDVLVKQKIKDIDSNNELTSTQREDAKAEIERLKKQAIDKVNHSKSIKDIETVKRTDFEEIDQFDPKRFTLNKAKKDIITDVNTQIQNGFKEIETIKGLTSNEKTQFDKQLTALQKEFLEKVEHAHNLVELNQLQQEFNNRYKHILNQAHLLGEKHIAEHKLGYVVVNKTQQILNNQSASYFIKQWALDRIKQIQLETMNSIRGAHTVQDVHKALLQGIEQILKVNVSIINQSFNDSLHNFNYLHSKFDARLREKDVANHIVQTETFKEVLKGTGVEPGKINKETQQPKLHKNDNDSLFKHLVDNFGKTVGVITLTGLLSSFWLVLAKRRKKEEEEKQSIKNHHKDIRLSDTDKIDPIVITKRKIDKEEQIQNDDKHSIPVAKHKKSKEKQLSEEDIHSIPVVKRKQNSDNKDTKQKKVTSKKKKTPQSTKKVVKTKKRSKK</sequence>
<evidence type="ECO:0000255" key="1"/>
<evidence type="ECO:0000256" key="2">
    <source>
        <dbReference type="SAM" id="MobiDB-lite"/>
    </source>
</evidence>
<evidence type="ECO:0000305" key="3"/>
<reference key="1">
    <citation type="journal article" date="2003" name="Mol. Microbiol.">
        <title>Genome-based analysis of virulence genes in a non-biofilm-forming Staphylococcus epidermidis strain (ATCC 12228).</title>
        <authorList>
            <person name="Zhang Y.-Q."/>
            <person name="Ren S.-X."/>
            <person name="Li H.-L."/>
            <person name="Wang Y.-X."/>
            <person name="Fu G."/>
            <person name="Yang J."/>
            <person name="Qin Z.-Q."/>
            <person name="Miao Y.-G."/>
            <person name="Wang W.-Y."/>
            <person name="Chen R.-S."/>
            <person name="Shen Y."/>
            <person name="Chen Z."/>
            <person name="Yuan Z.-H."/>
            <person name="Zhao G.-P."/>
            <person name="Qu D."/>
            <person name="Danchin A."/>
            <person name="Wen Y.-M."/>
        </authorList>
    </citation>
    <scope>NUCLEOTIDE SEQUENCE [LARGE SCALE GENOMIC DNA]</scope>
    <source>
        <strain>ATCC 12228 / FDA PCI 1200</strain>
    </source>
</reference>
<keyword id="KW-1003">Cell membrane</keyword>
<keyword id="KW-0472">Membrane</keyword>
<keyword id="KW-0677">Repeat</keyword>
<keyword id="KW-0812">Transmembrane</keyword>
<keyword id="KW-1133">Transmembrane helix</keyword>
<organism>
    <name type="scientific">Staphylococcus epidermidis (strain ATCC 12228 / FDA PCI 1200)</name>
    <dbReference type="NCBI Taxonomy" id="176280"/>
    <lineage>
        <taxon>Bacteria</taxon>
        <taxon>Bacillati</taxon>
        <taxon>Bacillota</taxon>
        <taxon>Bacilli</taxon>
        <taxon>Bacillales</taxon>
        <taxon>Staphylococcaceae</taxon>
        <taxon>Staphylococcus</taxon>
    </lineage>
</organism>
<protein>
    <recommendedName>
        <fullName>Extracellular matrix-binding protein ebh</fullName>
    </recommendedName>
    <alternativeName>
        <fullName>ECM-binding protein homolog</fullName>
    </alternativeName>
</protein>
<proteinExistence type="predicted"/>
<name>EBH_STAES</name>
<dbReference type="EMBL" id="AE015929">
    <property type="protein sequence ID" value="AAO04725.1"/>
    <property type="molecule type" value="Genomic_DNA"/>
</dbReference>
<dbReference type="RefSeq" id="NP_764683.1">
    <property type="nucleotide sequence ID" value="NC_004461.1"/>
</dbReference>
<dbReference type="SMR" id="Q8CP76"/>
<dbReference type="KEGG" id="sep:SE_1128"/>
<dbReference type="PATRIC" id="fig|176280.10.peg.1101"/>
<dbReference type="eggNOG" id="COG1196">
    <property type="taxonomic scope" value="Bacteria"/>
</dbReference>
<dbReference type="eggNOG" id="COG1511">
    <property type="taxonomic scope" value="Bacteria"/>
</dbReference>
<dbReference type="eggNOG" id="COG4372">
    <property type="taxonomic scope" value="Bacteria"/>
</dbReference>
<dbReference type="HOGENOM" id="CLU_222673_0_0_9"/>
<dbReference type="OrthoDB" id="2413604at2"/>
<dbReference type="Proteomes" id="UP000001411">
    <property type="component" value="Chromosome"/>
</dbReference>
<dbReference type="GO" id="GO:0005886">
    <property type="term" value="C:plasma membrane"/>
    <property type="evidence" value="ECO:0007669"/>
    <property type="project" value="UniProtKB-SubCell"/>
</dbReference>
<dbReference type="Gene3D" id="3.10.20.890">
    <property type="match status" value="1"/>
</dbReference>
<dbReference type="Gene3D" id="1.20.120.1850">
    <property type="entry name" value="Ebh helix bundles repeating unit (S and A modules)"/>
    <property type="match status" value="22"/>
</dbReference>
<dbReference type="Gene3D" id="1.20.5.420">
    <property type="entry name" value="Immunoglobulin FC, subunit C"/>
    <property type="match status" value="36"/>
</dbReference>
<dbReference type="InterPro" id="IPR011439">
    <property type="entry name" value="DUF1542"/>
</dbReference>
<dbReference type="InterPro" id="IPR026361">
    <property type="entry name" value="Ebh_dom"/>
</dbReference>
<dbReference type="InterPro" id="IPR051197">
    <property type="entry name" value="ECM-binding_protein"/>
</dbReference>
<dbReference type="InterPro" id="IPR020840">
    <property type="entry name" value="Extracell_matrix-bd_GA"/>
</dbReference>
<dbReference type="InterPro" id="IPR002988">
    <property type="entry name" value="GA_module"/>
</dbReference>
<dbReference type="InterPro" id="IPR009063">
    <property type="entry name" value="Ig/albumin-bd_sf"/>
</dbReference>
<dbReference type="NCBIfam" id="TIGR04264">
    <property type="entry name" value="hyperosmo_Ebh"/>
    <property type="match status" value="1"/>
</dbReference>
<dbReference type="PANTHER" id="PTHR33150">
    <property type="entry name" value="EXTRACELLULAR MATRIX-BINDING PROTEIN EBH"/>
    <property type="match status" value="1"/>
</dbReference>
<dbReference type="PANTHER" id="PTHR33150:SF1">
    <property type="entry name" value="EXTRACELLULAR MATRIX-BINDING PROTEIN EBH"/>
    <property type="match status" value="1"/>
</dbReference>
<dbReference type="Pfam" id="PF07564">
    <property type="entry name" value="DUF1542"/>
    <property type="match status" value="5"/>
</dbReference>
<dbReference type="Pfam" id="PF07554">
    <property type="entry name" value="FIVAR"/>
    <property type="match status" value="56"/>
</dbReference>
<dbReference type="Pfam" id="PF01468">
    <property type="entry name" value="GA"/>
    <property type="match status" value="21"/>
</dbReference>
<dbReference type="SMART" id="SM00844">
    <property type="entry name" value="GA"/>
    <property type="match status" value="39"/>
</dbReference>
<dbReference type="SUPFAM" id="SSF46997">
    <property type="entry name" value="Bacterial immunoglobulin/albumin-binding domains"/>
    <property type="match status" value="74"/>
</dbReference>